<proteinExistence type="inferred from homology"/>
<name>PDXT_STRPN</name>
<gene>
    <name evidence="1" type="primary">pdxT</name>
    <name type="ordered locus">SP_1467</name>
</gene>
<protein>
    <recommendedName>
        <fullName evidence="1">Pyridoxal 5'-phosphate synthase subunit PdxT</fullName>
        <ecNumber evidence="1">4.3.3.6</ecNumber>
    </recommendedName>
    <alternativeName>
        <fullName evidence="1">Pdx2</fullName>
    </alternativeName>
    <alternativeName>
        <fullName evidence="1">Pyridoxal 5'-phosphate synthase glutaminase subunit</fullName>
        <ecNumber evidence="1">3.5.1.2</ecNumber>
    </alternativeName>
</protein>
<dbReference type="EC" id="4.3.3.6" evidence="1"/>
<dbReference type="EC" id="3.5.1.2" evidence="1"/>
<dbReference type="EMBL" id="AE005672">
    <property type="protein sequence ID" value="AAK75561.1"/>
    <property type="molecule type" value="Genomic_DNA"/>
</dbReference>
<dbReference type="PIR" id="H95170">
    <property type="entry name" value="H95170"/>
</dbReference>
<dbReference type="RefSeq" id="WP_000689945.1">
    <property type="nucleotide sequence ID" value="NZ_CP155539.1"/>
</dbReference>
<dbReference type="SMR" id="Q97PX3"/>
<dbReference type="PaxDb" id="170187-SP_1467"/>
<dbReference type="EnsemblBacteria" id="AAK75561">
    <property type="protein sequence ID" value="AAK75561"/>
    <property type="gene ID" value="SP_1467"/>
</dbReference>
<dbReference type="GeneID" id="45653283"/>
<dbReference type="KEGG" id="spn:SP_1467"/>
<dbReference type="eggNOG" id="COG0311">
    <property type="taxonomic scope" value="Bacteria"/>
</dbReference>
<dbReference type="PhylomeDB" id="Q97PX3"/>
<dbReference type="BioCyc" id="SPNE170187:G1FZB-1483-MONOMER"/>
<dbReference type="UniPathway" id="UPA00245"/>
<dbReference type="Proteomes" id="UP000000585">
    <property type="component" value="Chromosome"/>
</dbReference>
<dbReference type="GO" id="GO:0005829">
    <property type="term" value="C:cytosol"/>
    <property type="evidence" value="ECO:0007669"/>
    <property type="project" value="TreeGrafter"/>
</dbReference>
<dbReference type="GO" id="GO:1903600">
    <property type="term" value="C:glutaminase complex"/>
    <property type="evidence" value="ECO:0007669"/>
    <property type="project" value="TreeGrafter"/>
</dbReference>
<dbReference type="GO" id="GO:0004359">
    <property type="term" value="F:glutaminase activity"/>
    <property type="evidence" value="ECO:0007669"/>
    <property type="project" value="UniProtKB-UniRule"/>
</dbReference>
<dbReference type="GO" id="GO:0036381">
    <property type="term" value="F:pyridoxal 5'-phosphate synthase (glutamine hydrolysing) activity"/>
    <property type="evidence" value="ECO:0007669"/>
    <property type="project" value="UniProtKB-UniRule"/>
</dbReference>
<dbReference type="GO" id="GO:0006543">
    <property type="term" value="P:glutamine catabolic process"/>
    <property type="evidence" value="ECO:0007669"/>
    <property type="project" value="UniProtKB-UniRule"/>
</dbReference>
<dbReference type="GO" id="GO:0042823">
    <property type="term" value="P:pyridoxal phosphate biosynthetic process"/>
    <property type="evidence" value="ECO:0007669"/>
    <property type="project" value="UniProtKB-UniRule"/>
</dbReference>
<dbReference type="GO" id="GO:0008614">
    <property type="term" value="P:pyridoxine metabolic process"/>
    <property type="evidence" value="ECO:0007669"/>
    <property type="project" value="TreeGrafter"/>
</dbReference>
<dbReference type="CDD" id="cd01749">
    <property type="entry name" value="GATase1_PB"/>
    <property type="match status" value="1"/>
</dbReference>
<dbReference type="FunFam" id="3.40.50.880:FF:000010">
    <property type="entry name" value="uncharacterized protein LOC100176842 isoform X2"/>
    <property type="match status" value="1"/>
</dbReference>
<dbReference type="Gene3D" id="3.40.50.880">
    <property type="match status" value="1"/>
</dbReference>
<dbReference type="HAMAP" id="MF_01615">
    <property type="entry name" value="PdxT"/>
    <property type="match status" value="1"/>
</dbReference>
<dbReference type="InterPro" id="IPR029062">
    <property type="entry name" value="Class_I_gatase-like"/>
</dbReference>
<dbReference type="InterPro" id="IPR002161">
    <property type="entry name" value="PdxT/SNO"/>
</dbReference>
<dbReference type="InterPro" id="IPR021196">
    <property type="entry name" value="PdxT/SNO_CS"/>
</dbReference>
<dbReference type="NCBIfam" id="TIGR03800">
    <property type="entry name" value="PLP_synth_Pdx2"/>
    <property type="match status" value="1"/>
</dbReference>
<dbReference type="PANTHER" id="PTHR31559">
    <property type="entry name" value="PYRIDOXAL 5'-PHOSPHATE SYNTHASE SUBUNIT SNO"/>
    <property type="match status" value="1"/>
</dbReference>
<dbReference type="PANTHER" id="PTHR31559:SF0">
    <property type="entry name" value="PYRIDOXAL 5'-PHOSPHATE SYNTHASE SUBUNIT SNO1-RELATED"/>
    <property type="match status" value="1"/>
</dbReference>
<dbReference type="Pfam" id="PF01174">
    <property type="entry name" value="SNO"/>
    <property type="match status" value="1"/>
</dbReference>
<dbReference type="PIRSF" id="PIRSF005639">
    <property type="entry name" value="Glut_amidoT_SNO"/>
    <property type="match status" value="1"/>
</dbReference>
<dbReference type="SUPFAM" id="SSF52317">
    <property type="entry name" value="Class I glutamine amidotransferase-like"/>
    <property type="match status" value="1"/>
</dbReference>
<dbReference type="PROSITE" id="PS01236">
    <property type="entry name" value="PDXT_SNO_1"/>
    <property type="match status" value="1"/>
</dbReference>
<dbReference type="PROSITE" id="PS51130">
    <property type="entry name" value="PDXT_SNO_2"/>
    <property type="match status" value="1"/>
</dbReference>
<comment type="function">
    <text evidence="1">Catalyzes the hydrolysis of glutamine to glutamate and ammonia as part of the biosynthesis of pyridoxal 5'-phosphate. The resulting ammonia molecule is channeled to the active site of PdxS.</text>
</comment>
<comment type="catalytic activity">
    <reaction evidence="1">
        <text>aldehydo-D-ribose 5-phosphate + D-glyceraldehyde 3-phosphate + L-glutamine = pyridoxal 5'-phosphate + L-glutamate + phosphate + 3 H2O + H(+)</text>
        <dbReference type="Rhea" id="RHEA:31507"/>
        <dbReference type="ChEBI" id="CHEBI:15377"/>
        <dbReference type="ChEBI" id="CHEBI:15378"/>
        <dbReference type="ChEBI" id="CHEBI:29985"/>
        <dbReference type="ChEBI" id="CHEBI:43474"/>
        <dbReference type="ChEBI" id="CHEBI:58273"/>
        <dbReference type="ChEBI" id="CHEBI:58359"/>
        <dbReference type="ChEBI" id="CHEBI:59776"/>
        <dbReference type="ChEBI" id="CHEBI:597326"/>
        <dbReference type="EC" id="4.3.3.6"/>
    </reaction>
</comment>
<comment type="catalytic activity">
    <reaction evidence="1">
        <text>L-glutamine + H2O = L-glutamate + NH4(+)</text>
        <dbReference type="Rhea" id="RHEA:15889"/>
        <dbReference type="ChEBI" id="CHEBI:15377"/>
        <dbReference type="ChEBI" id="CHEBI:28938"/>
        <dbReference type="ChEBI" id="CHEBI:29985"/>
        <dbReference type="ChEBI" id="CHEBI:58359"/>
        <dbReference type="EC" id="3.5.1.2"/>
    </reaction>
</comment>
<comment type="pathway">
    <text evidence="1">Cofactor biosynthesis; pyridoxal 5'-phosphate biosynthesis.</text>
</comment>
<comment type="subunit">
    <text evidence="1">In the presence of PdxS, forms a dodecamer of heterodimers. Only shows activity in the heterodimer.</text>
</comment>
<comment type="similarity">
    <text evidence="1">Belongs to the glutaminase PdxT/SNO family.</text>
</comment>
<evidence type="ECO:0000255" key="1">
    <source>
        <dbReference type="HAMAP-Rule" id="MF_01615"/>
    </source>
</evidence>
<feature type="chain" id="PRO_0000135667" description="Pyridoxal 5'-phosphate synthase subunit PdxT">
    <location>
        <begin position="1"/>
        <end position="193"/>
    </location>
</feature>
<feature type="active site" description="Nucleophile" evidence="1">
    <location>
        <position position="82"/>
    </location>
</feature>
<feature type="active site" description="Charge relay system" evidence="1">
    <location>
        <position position="172"/>
    </location>
</feature>
<feature type="active site" description="Charge relay system" evidence="1">
    <location>
        <position position="174"/>
    </location>
</feature>
<feature type="binding site" evidence="1">
    <location>
        <begin position="50"/>
        <end position="52"/>
    </location>
    <ligand>
        <name>L-glutamine</name>
        <dbReference type="ChEBI" id="CHEBI:58359"/>
    </ligand>
</feature>
<feature type="binding site" evidence="1">
    <location>
        <position position="109"/>
    </location>
    <ligand>
        <name>L-glutamine</name>
        <dbReference type="ChEBI" id="CHEBI:58359"/>
    </ligand>
</feature>
<feature type="binding site" evidence="1">
    <location>
        <begin position="136"/>
        <end position="137"/>
    </location>
    <ligand>
        <name>L-glutamine</name>
        <dbReference type="ChEBI" id="CHEBI:58359"/>
    </ligand>
</feature>
<keyword id="KW-0315">Glutamine amidotransferase</keyword>
<keyword id="KW-0378">Hydrolase</keyword>
<keyword id="KW-0456">Lyase</keyword>
<keyword id="KW-0663">Pyridoxal phosphate</keyword>
<keyword id="KW-1185">Reference proteome</keyword>
<reference key="1">
    <citation type="journal article" date="2001" name="Science">
        <title>Complete genome sequence of a virulent isolate of Streptococcus pneumoniae.</title>
        <authorList>
            <person name="Tettelin H."/>
            <person name="Nelson K.E."/>
            <person name="Paulsen I.T."/>
            <person name="Eisen J.A."/>
            <person name="Read T.D."/>
            <person name="Peterson S.N."/>
            <person name="Heidelberg J.F."/>
            <person name="DeBoy R.T."/>
            <person name="Haft D.H."/>
            <person name="Dodson R.J."/>
            <person name="Durkin A.S."/>
            <person name="Gwinn M.L."/>
            <person name="Kolonay J.F."/>
            <person name="Nelson W.C."/>
            <person name="Peterson J.D."/>
            <person name="Umayam L.A."/>
            <person name="White O."/>
            <person name="Salzberg S.L."/>
            <person name="Lewis M.R."/>
            <person name="Radune D."/>
            <person name="Holtzapple E.K."/>
            <person name="Khouri H.M."/>
            <person name="Wolf A.M."/>
            <person name="Utterback T.R."/>
            <person name="Hansen C.L."/>
            <person name="McDonald L.A."/>
            <person name="Feldblyum T.V."/>
            <person name="Angiuoli S.V."/>
            <person name="Dickinson T."/>
            <person name="Hickey E.K."/>
            <person name="Holt I.E."/>
            <person name="Loftus B.J."/>
            <person name="Yang F."/>
            <person name="Smith H.O."/>
            <person name="Venter J.C."/>
            <person name="Dougherty B.A."/>
            <person name="Morrison D.A."/>
            <person name="Hollingshead S.K."/>
            <person name="Fraser C.M."/>
        </authorList>
    </citation>
    <scope>NUCLEOTIDE SEQUENCE [LARGE SCALE GENOMIC DNA]</scope>
    <source>
        <strain>ATCC BAA-334 / TIGR4</strain>
    </source>
</reference>
<accession>Q97PX3</accession>
<organism>
    <name type="scientific">Streptococcus pneumoniae serotype 4 (strain ATCC BAA-334 / TIGR4)</name>
    <dbReference type="NCBI Taxonomy" id="170187"/>
    <lineage>
        <taxon>Bacteria</taxon>
        <taxon>Bacillati</taxon>
        <taxon>Bacillota</taxon>
        <taxon>Bacilli</taxon>
        <taxon>Lactobacillales</taxon>
        <taxon>Streptococcaceae</taxon>
        <taxon>Streptococcus</taxon>
    </lineage>
</organism>
<sequence>MKIGILALQGAFAEHAKVLDQLGVESVELRNLDDFQQDQSDLSGLILPGGESTTMGKLLRDQNMLLPIREAILSGLPVFGTCAGLILLAKEITSQKESHLGTMDMVVERNAYGRQLGSFYTEAECKGVGKIPMTFIRGPIISSVGEGVEILATVNNQIVAAQEKNMLVSSFHPELTDDVRLHQYFINMCKEKS</sequence>